<protein>
    <recommendedName>
        <fullName evidence="1">4-hydroxybenzoate octaprenyltransferase</fullName>
        <ecNumber evidence="1">2.5.1.39</ecNumber>
    </recommendedName>
    <alternativeName>
        <fullName evidence="1">4-HB polyprenyltransferase</fullName>
    </alternativeName>
</protein>
<proteinExistence type="inferred from homology"/>
<accession>Q0K739</accession>
<sequence length="285" mass="31374">MLERLSLYARLVRIDKPIGTLLLLWPTLWAMWMAAGGPPAWGLFWIFVAGTFLMRSAGCAINDWADRDFDKHVKRTRERPLTAGKIAAWEALAVAAVLALVAFALVLPLNALTKWLAVVAAVVAGTYPFFKRFFAIPQAYLGIAFGFGIPMAFAAIQDQVPPVAWLMLLANVFWAVAYDTAYAMVDRDDDLLIGMKTSAITFGRFDVAAIMLCYAAFLALMAWAGVLLGLGWPYWVGLAAAAGCAGYHYTLIRDRDRMRCFAAFRHNNWLGACVFAGTAVAYAIR</sequence>
<reference key="1">
    <citation type="journal article" date="2006" name="Nat. Biotechnol.">
        <title>Genome sequence of the bioplastic-producing 'Knallgas' bacterium Ralstonia eutropha H16.</title>
        <authorList>
            <person name="Pohlmann A."/>
            <person name="Fricke W.F."/>
            <person name="Reinecke F."/>
            <person name="Kusian B."/>
            <person name="Liesegang H."/>
            <person name="Cramm R."/>
            <person name="Eitinger T."/>
            <person name="Ewering C."/>
            <person name="Poetter M."/>
            <person name="Schwartz E."/>
            <person name="Strittmatter A."/>
            <person name="Voss I."/>
            <person name="Gottschalk G."/>
            <person name="Steinbuechel A."/>
            <person name="Friedrich B."/>
            <person name="Bowien B."/>
        </authorList>
    </citation>
    <scope>NUCLEOTIDE SEQUENCE [LARGE SCALE GENOMIC DNA]</scope>
    <source>
        <strain>ATCC 17699 / DSM 428 / KCTC 22496 / NCIMB 10442 / H16 / Stanier 337</strain>
    </source>
</reference>
<comment type="function">
    <text evidence="1">Catalyzes the prenylation of para-hydroxybenzoate (PHB) with an all-trans polyprenyl group. Mediates the second step in the final reaction sequence of ubiquinone-8 (UQ-8) biosynthesis, which is the condensation of the polyisoprenoid side chain with PHB, generating the first membrane-bound Q intermediate 3-octaprenyl-4-hydroxybenzoate.</text>
</comment>
<comment type="catalytic activity">
    <reaction evidence="1">
        <text>all-trans-octaprenyl diphosphate + 4-hydroxybenzoate = 4-hydroxy-3-(all-trans-octaprenyl)benzoate + diphosphate</text>
        <dbReference type="Rhea" id="RHEA:27782"/>
        <dbReference type="ChEBI" id="CHEBI:1617"/>
        <dbReference type="ChEBI" id="CHEBI:17879"/>
        <dbReference type="ChEBI" id="CHEBI:33019"/>
        <dbReference type="ChEBI" id="CHEBI:57711"/>
        <dbReference type="EC" id="2.5.1.39"/>
    </reaction>
</comment>
<comment type="cofactor">
    <cofactor evidence="1">
        <name>Mg(2+)</name>
        <dbReference type="ChEBI" id="CHEBI:18420"/>
    </cofactor>
</comment>
<comment type="pathway">
    <text evidence="1">Cofactor biosynthesis; ubiquinone biosynthesis.</text>
</comment>
<comment type="subcellular location">
    <subcellularLocation>
        <location evidence="1">Cell inner membrane</location>
        <topology evidence="1">Multi-pass membrane protein</topology>
    </subcellularLocation>
</comment>
<comment type="similarity">
    <text evidence="1">Belongs to the UbiA prenyltransferase family.</text>
</comment>
<comment type="sequence caution" evidence="2">
    <conflict type="erroneous initiation">
        <sequence resource="EMBL-CDS" id="CAJ94182"/>
    </conflict>
</comment>
<organism>
    <name type="scientific">Cupriavidus necator (strain ATCC 17699 / DSM 428 / KCTC 22496 / NCIMB 10442 / H16 / Stanier 337)</name>
    <name type="common">Ralstonia eutropha</name>
    <dbReference type="NCBI Taxonomy" id="381666"/>
    <lineage>
        <taxon>Bacteria</taxon>
        <taxon>Pseudomonadati</taxon>
        <taxon>Pseudomonadota</taxon>
        <taxon>Betaproteobacteria</taxon>
        <taxon>Burkholderiales</taxon>
        <taxon>Burkholderiaceae</taxon>
        <taxon>Cupriavidus</taxon>
    </lineage>
</organism>
<feature type="chain" id="PRO_0000336983" description="4-hydroxybenzoate octaprenyltransferase">
    <location>
        <begin position="1"/>
        <end position="285"/>
    </location>
</feature>
<feature type="transmembrane region" description="Helical" evidence="1">
    <location>
        <begin position="28"/>
        <end position="48"/>
    </location>
</feature>
<feature type="transmembrane region" description="Helical" evidence="1">
    <location>
        <begin position="86"/>
        <end position="106"/>
    </location>
</feature>
<feature type="transmembrane region" description="Helical" evidence="1">
    <location>
        <begin position="110"/>
        <end position="130"/>
    </location>
</feature>
<feature type="transmembrane region" description="Helical" evidence="1">
    <location>
        <begin position="133"/>
        <end position="153"/>
    </location>
</feature>
<feature type="transmembrane region" description="Helical" evidence="1">
    <location>
        <begin position="165"/>
        <end position="185"/>
    </location>
</feature>
<feature type="transmembrane region" description="Helical" evidence="1">
    <location>
        <begin position="210"/>
        <end position="230"/>
    </location>
</feature>
<feature type="transmembrane region" description="Helical" evidence="1">
    <location>
        <begin position="232"/>
        <end position="252"/>
    </location>
</feature>
<feature type="transmembrane region" description="Helical" evidence="1">
    <location>
        <begin position="262"/>
        <end position="284"/>
    </location>
</feature>
<gene>
    <name evidence="1" type="primary">ubiA</name>
    <name type="ordered locus">H16_A3107</name>
</gene>
<name>UBIA_CUPNH</name>
<evidence type="ECO:0000255" key="1">
    <source>
        <dbReference type="HAMAP-Rule" id="MF_01635"/>
    </source>
</evidence>
<evidence type="ECO:0000305" key="2"/>
<keyword id="KW-0997">Cell inner membrane</keyword>
<keyword id="KW-1003">Cell membrane</keyword>
<keyword id="KW-0460">Magnesium</keyword>
<keyword id="KW-0472">Membrane</keyword>
<keyword id="KW-1185">Reference proteome</keyword>
<keyword id="KW-0808">Transferase</keyword>
<keyword id="KW-0812">Transmembrane</keyword>
<keyword id="KW-1133">Transmembrane helix</keyword>
<keyword id="KW-0831">Ubiquinone biosynthesis</keyword>
<dbReference type="EC" id="2.5.1.39" evidence="1"/>
<dbReference type="EMBL" id="AM260479">
    <property type="protein sequence ID" value="CAJ94182.1"/>
    <property type="status" value="ALT_INIT"/>
    <property type="molecule type" value="Genomic_DNA"/>
</dbReference>
<dbReference type="RefSeq" id="WP_010815053.1">
    <property type="nucleotide sequence ID" value="NZ_CP039287.1"/>
</dbReference>
<dbReference type="SMR" id="Q0K739"/>
<dbReference type="STRING" id="381666.H16_A3107"/>
<dbReference type="KEGG" id="reh:H16_A3107"/>
<dbReference type="eggNOG" id="COG0382">
    <property type="taxonomic scope" value="Bacteria"/>
</dbReference>
<dbReference type="HOGENOM" id="CLU_034879_1_0_4"/>
<dbReference type="OrthoDB" id="9782418at2"/>
<dbReference type="UniPathway" id="UPA00232"/>
<dbReference type="Proteomes" id="UP000008210">
    <property type="component" value="Chromosome 1"/>
</dbReference>
<dbReference type="GO" id="GO:0005886">
    <property type="term" value="C:plasma membrane"/>
    <property type="evidence" value="ECO:0007669"/>
    <property type="project" value="UniProtKB-SubCell"/>
</dbReference>
<dbReference type="GO" id="GO:0008412">
    <property type="term" value="F:4-hydroxybenzoate polyprenyltransferase activity"/>
    <property type="evidence" value="ECO:0007669"/>
    <property type="project" value="UniProtKB-UniRule"/>
</dbReference>
<dbReference type="GO" id="GO:0006744">
    <property type="term" value="P:ubiquinone biosynthetic process"/>
    <property type="evidence" value="ECO:0007669"/>
    <property type="project" value="UniProtKB-UniRule"/>
</dbReference>
<dbReference type="CDD" id="cd13959">
    <property type="entry name" value="PT_UbiA_COQ2"/>
    <property type="match status" value="1"/>
</dbReference>
<dbReference type="FunFam" id="1.10.357.140:FF:000002">
    <property type="entry name" value="4-hydroxybenzoate octaprenyltransferase"/>
    <property type="match status" value="1"/>
</dbReference>
<dbReference type="FunFam" id="1.20.120.1780:FF:000001">
    <property type="entry name" value="4-hydroxybenzoate octaprenyltransferase"/>
    <property type="match status" value="1"/>
</dbReference>
<dbReference type="Gene3D" id="1.10.357.140">
    <property type="entry name" value="UbiA prenyltransferase"/>
    <property type="match status" value="1"/>
</dbReference>
<dbReference type="Gene3D" id="1.20.120.1780">
    <property type="entry name" value="UbiA prenyltransferase"/>
    <property type="match status" value="1"/>
</dbReference>
<dbReference type="HAMAP" id="MF_01635">
    <property type="entry name" value="UbiA"/>
    <property type="match status" value="1"/>
</dbReference>
<dbReference type="InterPro" id="IPR006370">
    <property type="entry name" value="HB_polyprenyltransferase-like"/>
</dbReference>
<dbReference type="InterPro" id="IPR039653">
    <property type="entry name" value="Prenyltransferase"/>
</dbReference>
<dbReference type="InterPro" id="IPR000537">
    <property type="entry name" value="UbiA_prenyltransferase"/>
</dbReference>
<dbReference type="InterPro" id="IPR030470">
    <property type="entry name" value="UbiA_prenylTrfase_CS"/>
</dbReference>
<dbReference type="InterPro" id="IPR044878">
    <property type="entry name" value="UbiA_sf"/>
</dbReference>
<dbReference type="NCBIfam" id="TIGR01474">
    <property type="entry name" value="ubiA_proteo"/>
    <property type="match status" value="1"/>
</dbReference>
<dbReference type="PANTHER" id="PTHR11048:SF28">
    <property type="entry name" value="4-HYDROXYBENZOATE POLYPRENYLTRANSFERASE, MITOCHONDRIAL"/>
    <property type="match status" value="1"/>
</dbReference>
<dbReference type="PANTHER" id="PTHR11048">
    <property type="entry name" value="PRENYLTRANSFERASES"/>
    <property type="match status" value="1"/>
</dbReference>
<dbReference type="Pfam" id="PF01040">
    <property type="entry name" value="UbiA"/>
    <property type="match status" value="1"/>
</dbReference>
<dbReference type="PROSITE" id="PS00943">
    <property type="entry name" value="UBIA"/>
    <property type="match status" value="1"/>
</dbReference>